<name>COXX_SACI7</name>
<comment type="function">
    <text evidence="1">Converts heme B (protoheme IX) to heme O by substitution of the vinyl group on carbon 2 of heme B porphyrin ring with a hydroxyethyl farnesyl side group.</text>
</comment>
<comment type="catalytic activity">
    <reaction evidence="1">
        <text>heme b + (2E,6E)-farnesyl diphosphate + H2O = Fe(II)-heme o + diphosphate</text>
        <dbReference type="Rhea" id="RHEA:28070"/>
        <dbReference type="ChEBI" id="CHEBI:15377"/>
        <dbReference type="ChEBI" id="CHEBI:33019"/>
        <dbReference type="ChEBI" id="CHEBI:60344"/>
        <dbReference type="ChEBI" id="CHEBI:60530"/>
        <dbReference type="ChEBI" id="CHEBI:175763"/>
        <dbReference type="EC" id="2.5.1.141"/>
    </reaction>
</comment>
<comment type="pathway">
    <text evidence="1">Porphyrin-containing compound metabolism; heme O biosynthesis; heme O from protoheme: step 1/1.</text>
</comment>
<comment type="subcellular location">
    <subcellularLocation>
        <location evidence="1">Cell membrane</location>
        <topology evidence="1">Multi-pass membrane protein</topology>
    </subcellularLocation>
</comment>
<comment type="miscellaneous">
    <text evidence="1">Carbon 2 of the heme B porphyrin ring is defined according to the Fischer nomenclature.</text>
</comment>
<comment type="similarity">
    <text evidence="1">Belongs to the UbiA prenyltransferase family. Protoheme IX farnesyltransferase subfamily.</text>
</comment>
<accession>C3NEK7</accession>
<reference key="1">
    <citation type="journal article" date="2009" name="Proc. Natl. Acad. Sci. U.S.A.">
        <title>Biogeography of the Sulfolobus islandicus pan-genome.</title>
        <authorList>
            <person name="Reno M.L."/>
            <person name="Held N.L."/>
            <person name="Fields C.J."/>
            <person name="Burke P.V."/>
            <person name="Whitaker R.J."/>
        </authorList>
    </citation>
    <scope>NUCLEOTIDE SEQUENCE [LARGE SCALE GENOMIC DNA]</scope>
    <source>
        <strain>Y.G.57.14 / Yellowstone #1</strain>
    </source>
</reference>
<dbReference type="EC" id="2.5.1.141" evidence="1"/>
<dbReference type="EMBL" id="CP001403">
    <property type="protein sequence ID" value="ACP45746.1"/>
    <property type="molecule type" value="Genomic_DNA"/>
</dbReference>
<dbReference type="RefSeq" id="WP_012716199.1">
    <property type="nucleotide sequence ID" value="NC_012622.1"/>
</dbReference>
<dbReference type="SMR" id="C3NEK7"/>
<dbReference type="GeneID" id="7806072"/>
<dbReference type="KEGG" id="siy:YG5714_1484"/>
<dbReference type="HOGENOM" id="CLU_029631_0_1_2"/>
<dbReference type="UniPathway" id="UPA00834">
    <property type="reaction ID" value="UER00712"/>
</dbReference>
<dbReference type="Proteomes" id="UP000002308">
    <property type="component" value="Chromosome"/>
</dbReference>
<dbReference type="GO" id="GO:0005886">
    <property type="term" value="C:plasma membrane"/>
    <property type="evidence" value="ECO:0007669"/>
    <property type="project" value="UniProtKB-SubCell"/>
</dbReference>
<dbReference type="GO" id="GO:0008495">
    <property type="term" value="F:protoheme IX farnesyltransferase activity"/>
    <property type="evidence" value="ECO:0007669"/>
    <property type="project" value="UniProtKB-UniRule"/>
</dbReference>
<dbReference type="GO" id="GO:0048034">
    <property type="term" value="P:heme O biosynthetic process"/>
    <property type="evidence" value="ECO:0007669"/>
    <property type="project" value="UniProtKB-UniRule"/>
</dbReference>
<dbReference type="CDD" id="cd13957">
    <property type="entry name" value="PT_UbiA_Cox10"/>
    <property type="match status" value="1"/>
</dbReference>
<dbReference type="FunFam" id="1.10.357.140:FF:000018">
    <property type="entry name" value="Protoheme IX farnesyltransferase"/>
    <property type="match status" value="1"/>
</dbReference>
<dbReference type="Gene3D" id="1.10.357.140">
    <property type="entry name" value="UbiA prenyltransferase"/>
    <property type="match status" value="1"/>
</dbReference>
<dbReference type="HAMAP" id="MF_00154">
    <property type="entry name" value="CyoE_CtaB"/>
    <property type="match status" value="1"/>
</dbReference>
<dbReference type="InterPro" id="IPR006369">
    <property type="entry name" value="Protohaem_IX_farnesylTrfase"/>
</dbReference>
<dbReference type="InterPro" id="IPR000537">
    <property type="entry name" value="UbiA_prenyltransferase"/>
</dbReference>
<dbReference type="InterPro" id="IPR044878">
    <property type="entry name" value="UbiA_sf"/>
</dbReference>
<dbReference type="NCBIfam" id="TIGR01473">
    <property type="entry name" value="cyoE_ctaB"/>
    <property type="match status" value="1"/>
</dbReference>
<dbReference type="PANTHER" id="PTHR43448">
    <property type="entry name" value="PROTOHEME IX FARNESYLTRANSFERASE, MITOCHONDRIAL"/>
    <property type="match status" value="1"/>
</dbReference>
<dbReference type="PANTHER" id="PTHR43448:SF2">
    <property type="entry name" value="PROTOHEME IX FARNESYLTRANSFERASE, MITOCHONDRIAL"/>
    <property type="match status" value="1"/>
</dbReference>
<dbReference type="Pfam" id="PF01040">
    <property type="entry name" value="UbiA"/>
    <property type="match status" value="1"/>
</dbReference>
<sequence length="285" mass="31280">MSLQQKIKAYLKLGKLGVVSLLDLAAVAGAFLAYKHGISLLPIIPMFIGGTLASMGAMIINSGIEIDRDKVMSRTSKRPTVVGYVNRKEAIIVGSLLAILGTALGFIDNILTAFFIALGVVIYIFVYTILLKPRTWLNIVIGGFAGSAAAWAGYTSLTNSLTLEGFLLGFLIFMWTPGHFWSLALKYREDYVNAHYPMLPAVVGITTSARAIAISNTLMIPIVLLLGYYINLIALIAFSILSLFLMFLSYRLILNPTKEEAIKSFIFSNIYLMLILLIMIIVKLI</sequence>
<protein>
    <recommendedName>
        <fullName evidence="1">Protoheme IX farnesyltransferase</fullName>
        <ecNumber evidence="1">2.5.1.141</ecNumber>
    </recommendedName>
    <alternativeName>
        <fullName evidence="1">Heme B farnesyltransferase</fullName>
    </alternativeName>
    <alternativeName>
        <fullName evidence="1">Heme O synthase</fullName>
    </alternativeName>
</protein>
<feature type="chain" id="PRO_1000203464" description="Protoheme IX farnesyltransferase">
    <location>
        <begin position="1"/>
        <end position="285"/>
    </location>
</feature>
<feature type="transmembrane region" description="Helical" evidence="1">
    <location>
        <begin position="13"/>
        <end position="33"/>
    </location>
</feature>
<feature type="transmembrane region" description="Helical" evidence="1">
    <location>
        <begin position="40"/>
        <end position="60"/>
    </location>
</feature>
<feature type="transmembrane region" description="Helical" evidence="1">
    <location>
        <begin position="89"/>
        <end position="109"/>
    </location>
</feature>
<feature type="transmembrane region" description="Helical" evidence="1">
    <location>
        <begin position="110"/>
        <end position="130"/>
    </location>
</feature>
<feature type="transmembrane region" description="Helical" evidence="1">
    <location>
        <begin position="137"/>
        <end position="157"/>
    </location>
</feature>
<feature type="transmembrane region" description="Helical" evidence="1">
    <location>
        <begin position="165"/>
        <end position="185"/>
    </location>
</feature>
<feature type="transmembrane region" description="Helical" evidence="1">
    <location>
        <begin position="194"/>
        <end position="214"/>
    </location>
</feature>
<feature type="transmembrane region" description="Helical" evidence="1">
    <location>
        <begin position="218"/>
        <end position="238"/>
    </location>
</feature>
<feature type="transmembrane region" description="Helical" evidence="1">
    <location>
        <begin position="265"/>
        <end position="285"/>
    </location>
</feature>
<organism>
    <name type="scientific">Saccharolobus islandicus (strain Y.G.57.14 / Yellowstone #1)</name>
    <name type="common">Sulfolobus islandicus</name>
    <dbReference type="NCBI Taxonomy" id="439386"/>
    <lineage>
        <taxon>Archaea</taxon>
        <taxon>Thermoproteota</taxon>
        <taxon>Thermoprotei</taxon>
        <taxon>Sulfolobales</taxon>
        <taxon>Sulfolobaceae</taxon>
        <taxon>Saccharolobus</taxon>
    </lineage>
</organism>
<proteinExistence type="inferred from homology"/>
<gene>
    <name evidence="1" type="primary">ctaB</name>
    <name type="ordered locus">YG5714_1484</name>
</gene>
<keyword id="KW-1003">Cell membrane</keyword>
<keyword id="KW-0350">Heme biosynthesis</keyword>
<keyword id="KW-0472">Membrane</keyword>
<keyword id="KW-0808">Transferase</keyword>
<keyword id="KW-0812">Transmembrane</keyword>
<keyword id="KW-1133">Transmembrane helix</keyword>
<evidence type="ECO:0000255" key="1">
    <source>
        <dbReference type="HAMAP-Rule" id="MF_00154"/>
    </source>
</evidence>